<protein>
    <recommendedName>
        <fullName>Kinesin light chain 3</fullName>
    </recommendedName>
    <alternativeName>
        <fullName>Kinesin light chain KLCt</fullName>
    </alternativeName>
</protein>
<accession>Q68G30</accession>
<accession>Q9ESH7</accession>
<proteinExistence type="evidence at protein level"/>
<organism>
    <name type="scientific">Rattus norvegicus</name>
    <name type="common">Rat</name>
    <dbReference type="NCBI Taxonomy" id="10116"/>
    <lineage>
        <taxon>Eukaryota</taxon>
        <taxon>Metazoa</taxon>
        <taxon>Chordata</taxon>
        <taxon>Craniata</taxon>
        <taxon>Vertebrata</taxon>
        <taxon>Euteleostomi</taxon>
        <taxon>Mammalia</taxon>
        <taxon>Eutheria</taxon>
        <taxon>Euarchontoglires</taxon>
        <taxon>Glires</taxon>
        <taxon>Rodentia</taxon>
        <taxon>Myomorpha</taxon>
        <taxon>Muroidea</taxon>
        <taxon>Muridae</taxon>
        <taxon>Murinae</taxon>
        <taxon>Rattus</taxon>
    </lineage>
</organism>
<evidence type="ECO:0000250" key="1">
    <source>
        <dbReference type="UniProtKB" id="Q6P597"/>
    </source>
</evidence>
<evidence type="ECO:0000250" key="2">
    <source>
        <dbReference type="UniProtKB" id="Q91W40"/>
    </source>
</evidence>
<evidence type="ECO:0000255" key="3"/>
<evidence type="ECO:0000256" key="4">
    <source>
        <dbReference type="SAM" id="MobiDB-lite"/>
    </source>
</evidence>
<evidence type="ECO:0000269" key="5">
    <source>
    </source>
</evidence>
<evidence type="ECO:0000269" key="6">
    <source>
    </source>
</evidence>
<evidence type="ECO:0000269" key="7">
    <source>
    </source>
</evidence>
<evidence type="ECO:0000305" key="8"/>
<evidence type="ECO:0000305" key="9">
    <source>
    </source>
</evidence>
<evidence type="ECO:0000305" key="10">
    <source>
    </source>
</evidence>
<evidence type="ECO:0000305" key="11">
    <source>
    </source>
</evidence>
<sequence length="505" mass="55655">MSVQVAAPGSTGLGPERLNPEELVRQTRQVVQGLEALRAEHHSLAGHLAEALAGPGPVAGVELLEEKQQVVNHSLEAIELGLGEAQVLLALSAHVGVLEAEKQRLRAQARRLAQENTWLREELEETQRRLRASEEAVAQLEEEKSHLQFLGQLRQYDPPEESQRPDSPPRRDSLASLFPSEEEEKKGPEAAGAAAAQQGGYEIPARLRTLHNLVIQYASQGRYEVAVPLCRQALEDLERSSGHCHPDVATMLNILALVYRDQNKYKEATELLHDALQIREQTLGPEHPAVAATLNNLAVLYGKRGRYREAEPLCQRALEIREKVLGADHPDVAKQLNNLALLCQNQGKFQDVERHYARALSIYEALGGPQDPNVAKTKNNLASAYLKQNKYQQAEELYKEILSQEALPAPLGAPQGGTAGEAQQQVLRRSSSFSKLRESIRRGSEKLVSRLRGESMAGAAGMKRAMSLNMLNVDGPRAARMQLSTQHLNEASRTLSASTQDLSPR</sequence>
<gene>
    <name type="primary">Klc3</name>
</gene>
<comment type="function">
    <text evidence="2">Kinesin is a microtubule-associated force-producing protein that may play a role in organelle transport. Plays a role during spermiogenesis in the development of the sperm tail midpiece and in the normal function of spermatozoa (By similarity). May play a role in the formation of the mitochondrial sheath formation in the developing spermatid midpiece (By similarity).</text>
</comment>
<comment type="subunit">
    <text evidence="2 5 6">Oligomer composed of two heavy chains and two light chains. Associates with microtubulin in an ATP-dependent manner (PubMed:11319135). Interacts with KIF5C (PubMed:11319135). Interacts with ODF1 (PubMed:12594206). Interacts with LRGUK (By similarity). Interacts with VDAC2 (By similarity).</text>
</comment>
<comment type="subcellular location">
    <subcellularLocation>
        <location evidence="9 10 11">Cytoplasm</location>
        <location evidence="9 10 11">Cytoskeleton</location>
    </subcellularLocation>
    <subcellularLocation>
        <location evidence="6 7">Mitochondrion</location>
    </subcellularLocation>
    <text evidence="2 6 7">In elongating spermatid tail midpiece, localized in outer dense fibers (ODFs) and associates with mitochondria (PubMed:12594206, PubMed:15464570). Also localizes to the manchette in elongating spermatids (By similarity).</text>
</comment>
<comment type="tissue specificity">
    <text evidence="5">Expressed in postmeiotic male germ cells (at protein level).</text>
</comment>
<comment type="domain">
    <text evidence="5 6 7">The heptad repeat (HR) motif is sufficient for interaction with kinesin heavy (KHL) chains and ODF1. The TPR region is involved in mitochondrial binding.</text>
</comment>
<comment type="similarity">
    <text evidence="8">Belongs to the kinesin light chain family.</text>
</comment>
<name>KLC3_RAT</name>
<dbReference type="EMBL" id="AF166267">
    <property type="protein sequence ID" value="AAG15432.1"/>
    <property type="molecule type" value="mRNA"/>
</dbReference>
<dbReference type="EMBL" id="BC078736">
    <property type="protein sequence ID" value="AAH78736.1"/>
    <property type="molecule type" value="mRNA"/>
</dbReference>
<dbReference type="EMBL" id="BC097284">
    <property type="protein sequence ID" value="AAH97284.1"/>
    <property type="molecule type" value="mRNA"/>
</dbReference>
<dbReference type="RefSeq" id="NP_612529.2">
    <property type="nucleotide sequence ID" value="NM_138520.2"/>
</dbReference>
<dbReference type="RefSeq" id="XP_006228440.2">
    <property type="nucleotide sequence ID" value="XM_006228378.5"/>
</dbReference>
<dbReference type="RefSeq" id="XP_006228442.1">
    <property type="nucleotide sequence ID" value="XM_006228380.3"/>
</dbReference>
<dbReference type="SMR" id="Q68G30"/>
<dbReference type="FunCoup" id="Q68G30">
    <property type="interactions" value="19"/>
</dbReference>
<dbReference type="STRING" id="10116.ENSRNOP00000060483"/>
<dbReference type="iPTMnet" id="Q68G30"/>
<dbReference type="PhosphoSitePlus" id="Q68G30"/>
<dbReference type="jPOST" id="Q68G30"/>
<dbReference type="PaxDb" id="10116-ENSRNOP00000060483"/>
<dbReference type="Ensembl" id="ENSRNOT00000068092.4">
    <property type="protein sequence ID" value="ENSRNOP00000060483.2"/>
    <property type="gene ID" value="ENSRNOG00000018101.7"/>
</dbReference>
<dbReference type="GeneID" id="171549"/>
<dbReference type="KEGG" id="rno:171549"/>
<dbReference type="UCSC" id="RGD:621432">
    <property type="organism name" value="rat"/>
</dbReference>
<dbReference type="AGR" id="RGD:621432"/>
<dbReference type="CTD" id="147700"/>
<dbReference type="RGD" id="621432">
    <property type="gene designation" value="Klc3"/>
</dbReference>
<dbReference type="eggNOG" id="KOG1840">
    <property type="taxonomic scope" value="Eukaryota"/>
</dbReference>
<dbReference type="GeneTree" id="ENSGT00940000162356"/>
<dbReference type="HOGENOM" id="CLU_019953_2_0_1"/>
<dbReference type="InParanoid" id="Q68G30"/>
<dbReference type="OMA" id="HTSGHCH"/>
<dbReference type="OrthoDB" id="413723at2759"/>
<dbReference type="PhylomeDB" id="Q68G30"/>
<dbReference type="Reactome" id="R-RNO-2132295">
    <property type="pathway name" value="MHC class II antigen presentation"/>
</dbReference>
<dbReference type="Reactome" id="R-RNO-5625970">
    <property type="pathway name" value="RHO GTPases activate KTN1"/>
</dbReference>
<dbReference type="Reactome" id="R-RNO-6811434">
    <property type="pathway name" value="COPI-dependent Golgi-to-ER retrograde traffic"/>
</dbReference>
<dbReference type="Reactome" id="R-RNO-983189">
    <property type="pathway name" value="Kinesins"/>
</dbReference>
<dbReference type="PRO" id="PR:Q68G30"/>
<dbReference type="Proteomes" id="UP000002494">
    <property type="component" value="Chromosome 1"/>
</dbReference>
<dbReference type="Bgee" id="ENSRNOG00000018101">
    <property type="expression patterns" value="Expressed in testis and 18 other cell types or tissues"/>
</dbReference>
<dbReference type="GO" id="GO:0035253">
    <property type="term" value="C:ciliary rootlet"/>
    <property type="evidence" value="ECO:0000266"/>
    <property type="project" value="RGD"/>
</dbReference>
<dbReference type="GO" id="GO:0005737">
    <property type="term" value="C:cytoplasm"/>
    <property type="evidence" value="ECO:0000266"/>
    <property type="project" value="RGD"/>
</dbReference>
<dbReference type="GO" id="GO:0005871">
    <property type="term" value="C:kinesin complex"/>
    <property type="evidence" value="ECO:0000304"/>
    <property type="project" value="RGD"/>
</dbReference>
<dbReference type="GO" id="GO:0005874">
    <property type="term" value="C:microtubule"/>
    <property type="evidence" value="ECO:0007669"/>
    <property type="project" value="UniProtKB-KW"/>
</dbReference>
<dbReference type="GO" id="GO:0005739">
    <property type="term" value="C:mitochondrion"/>
    <property type="evidence" value="ECO:0000314"/>
    <property type="project" value="UniProtKB"/>
</dbReference>
<dbReference type="GO" id="GO:0031514">
    <property type="term" value="C:motile cilium"/>
    <property type="evidence" value="ECO:0000266"/>
    <property type="project" value="RGD"/>
</dbReference>
<dbReference type="GO" id="GO:0043005">
    <property type="term" value="C:neuron projection"/>
    <property type="evidence" value="ECO:0000266"/>
    <property type="project" value="RGD"/>
</dbReference>
<dbReference type="GO" id="GO:0019894">
    <property type="term" value="F:kinesin binding"/>
    <property type="evidence" value="ECO:0000266"/>
    <property type="project" value="RGD"/>
</dbReference>
<dbReference type="GO" id="GO:0008017">
    <property type="term" value="F:microtubule binding"/>
    <property type="evidence" value="ECO:0000266"/>
    <property type="project" value="RGD"/>
</dbReference>
<dbReference type="GO" id="GO:0003777">
    <property type="term" value="F:microtubule motor activity"/>
    <property type="evidence" value="ECO:0000304"/>
    <property type="project" value="RGD"/>
</dbReference>
<dbReference type="GO" id="GO:0008088">
    <property type="term" value="P:axo-dendritic transport"/>
    <property type="evidence" value="ECO:0000266"/>
    <property type="project" value="RGD"/>
</dbReference>
<dbReference type="GO" id="GO:0007018">
    <property type="term" value="P:microtubule-based movement"/>
    <property type="evidence" value="ECO:0000318"/>
    <property type="project" value="GO_Central"/>
</dbReference>
<dbReference type="GO" id="GO:0120317">
    <property type="term" value="P:sperm mitochondrial sheath assembly"/>
    <property type="evidence" value="ECO:0000250"/>
    <property type="project" value="UniProtKB"/>
</dbReference>
<dbReference type="GO" id="GO:0007286">
    <property type="term" value="P:spermatid development"/>
    <property type="evidence" value="ECO:0000250"/>
    <property type="project" value="UniProtKB"/>
</dbReference>
<dbReference type="GO" id="GO:0007283">
    <property type="term" value="P:spermatogenesis"/>
    <property type="evidence" value="ECO:0000250"/>
    <property type="project" value="UniProtKB"/>
</dbReference>
<dbReference type="FunFam" id="1.25.40.10:FF:000003">
    <property type="entry name" value="kinesin light chain isoform X1"/>
    <property type="match status" value="1"/>
</dbReference>
<dbReference type="Gene3D" id="1.25.40.10">
    <property type="entry name" value="Tetratricopeptide repeat domain"/>
    <property type="match status" value="1"/>
</dbReference>
<dbReference type="InterPro" id="IPR002151">
    <property type="entry name" value="Kinesin_light"/>
</dbReference>
<dbReference type="InterPro" id="IPR011990">
    <property type="entry name" value="TPR-like_helical_dom_sf"/>
</dbReference>
<dbReference type="InterPro" id="IPR019734">
    <property type="entry name" value="TPR_rpt"/>
</dbReference>
<dbReference type="PANTHER" id="PTHR45783">
    <property type="entry name" value="KINESIN LIGHT CHAIN"/>
    <property type="match status" value="1"/>
</dbReference>
<dbReference type="PANTHER" id="PTHR45783:SF1">
    <property type="entry name" value="KINESIN LIGHT CHAIN 3"/>
    <property type="match status" value="1"/>
</dbReference>
<dbReference type="Pfam" id="PF13424">
    <property type="entry name" value="TPR_12"/>
    <property type="match status" value="2"/>
</dbReference>
<dbReference type="PRINTS" id="PR00381">
    <property type="entry name" value="KINESINLIGHT"/>
</dbReference>
<dbReference type="SMART" id="SM00028">
    <property type="entry name" value="TPR"/>
    <property type="match status" value="4"/>
</dbReference>
<dbReference type="SUPFAM" id="SSF48452">
    <property type="entry name" value="TPR-like"/>
    <property type="match status" value="1"/>
</dbReference>
<dbReference type="PROSITE" id="PS50005">
    <property type="entry name" value="TPR"/>
    <property type="match status" value="5"/>
</dbReference>
<dbReference type="PROSITE" id="PS50293">
    <property type="entry name" value="TPR_REGION"/>
    <property type="match status" value="1"/>
</dbReference>
<feature type="chain" id="PRO_0000230788" description="Kinesin light chain 3">
    <location>
        <begin position="1"/>
        <end position="505"/>
    </location>
</feature>
<feature type="repeat" description="TPR 1">
    <location>
        <begin position="207"/>
        <end position="240"/>
    </location>
</feature>
<feature type="repeat" description="TPR 2">
    <location>
        <begin position="249"/>
        <end position="282"/>
    </location>
</feature>
<feature type="repeat" description="TPR 3">
    <location>
        <begin position="291"/>
        <end position="324"/>
    </location>
</feature>
<feature type="repeat" description="TPR 4">
    <location>
        <begin position="333"/>
        <end position="366"/>
    </location>
</feature>
<feature type="repeat" description="TPR 5">
    <location>
        <begin position="375"/>
        <end position="408"/>
    </location>
</feature>
<feature type="region of interest" description="Disordered" evidence="4">
    <location>
        <begin position="1"/>
        <end position="20"/>
    </location>
</feature>
<feature type="region of interest" description="Disordered" evidence="4">
    <location>
        <begin position="154"/>
        <end position="197"/>
    </location>
</feature>
<feature type="region of interest" description="Disordered" evidence="4">
    <location>
        <begin position="409"/>
        <end position="439"/>
    </location>
</feature>
<feature type="region of interest" description="Disordered" evidence="4">
    <location>
        <begin position="486"/>
        <end position="505"/>
    </location>
</feature>
<feature type="coiled-coil region" evidence="3">
    <location>
        <begin position="90"/>
        <end position="150"/>
    </location>
</feature>
<feature type="compositionally biased region" description="Basic and acidic residues" evidence="4">
    <location>
        <begin position="161"/>
        <end position="173"/>
    </location>
</feature>
<feature type="compositionally biased region" description="Polar residues" evidence="4">
    <location>
        <begin position="421"/>
        <end position="434"/>
    </location>
</feature>
<feature type="modified residue" description="Phosphoserine" evidence="2">
    <location>
        <position position="173"/>
    </location>
</feature>
<feature type="modified residue" description="Phosphoserine" evidence="1">
    <location>
        <position position="467"/>
    </location>
</feature>
<feature type="modified residue" description="Phosphothreonine" evidence="1">
    <location>
        <position position="499"/>
    </location>
</feature>
<feature type="modified residue" description="Phosphoserine" evidence="1">
    <location>
        <position position="503"/>
    </location>
</feature>
<feature type="sequence conflict" description="In Ref. 1; AAG15432." evidence="8" ref="1">
    <original>A</original>
    <variation>D</variation>
    <location>
        <position position="205"/>
    </location>
</feature>
<feature type="sequence conflict" description="In Ref. 1; AAG15432." evidence="8" ref="1">
    <original>L</original>
    <variation>V</variation>
    <location>
        <position position="213"/>
    </location>
</feature>
<feature type="sequence conflict" description="In Ref. 1; AAG15432." evidence="8" ref="1">
    <original>QG</original>
    <variation>HV</variation>
    <location>
        <begin position="220"/>
        <end position="221"/>
    </location>
</feature>
<feature type="sequence conflict" description="In Ref. 1; AAG15432." evidence="8" ref="1">
    <original>V</original>
    <variation>I</variation>
    <location>
        <position position="227"/>
    </location>
</feature>
<feature type="sequence conflict" description="In Ref. 1; AAG15432." evidence="8" ref="1">
    <original>E</original>
    <variation>V</variation>
    <location>
        <position position="238"/>
    </location>
</feature>
<feature type="sequence conflict" description="In Ref. 1; AAG15432." evidence="8" ref="1">
    <original>C</original>
    <variation>F</variation>
    <location>
        <position position="244"/>
    </location>
</feature>
<feature type="sequence conflict" description="In Ref. 1; AAG15432." evidence="8" ref="1">
    <original>ATMLNI</original>
    <variation>PTMVDF</variation>
    <location>
        <begin position="249"/>
        <end position="254"/>
    </location>
</feature>
<feature type="sequence conflict" description="In Ref. 1; AAG15432." evidence="8" ref="1">
    <original>L</original>
    <variation>F</variation>
    <location>
        <position position="271"/>
    </location>
</feature>
<feature type="sequence conflict" description="In Ref. 1; AAG15432." evidence="8" ref="1">
    <original>T</original>
    <variation>I</variation>
    <location>
        <position position="377"/>
    </location>
</feature>
<keyword id="KW-0175">Coiled coil</keyword>
<keyword id="KW-0963">Cytoplasm</keyword>
<keyword id="KW-0206">Cytoskeleton</keyword>
<keyword id="KW-0221">Differentiation</keyword>
<keyword id="KW-0493">Microtubule</keyword>
<keyword id="KW-0496">Mitochondrion</keyword>
<keyword id="KW-0505">Motor protein</keyword>
<keyword id="KW-0597">Phosphoprotein</keyword>
<keyword id="KW-1185">Reference proteome</keyword>
<keyword id="KW-0677">Repeat</keyword>
<keyword id="KW-0744">Spermatogenesis</keyword>
<keyword id="KW-0802">TPR repeat</keyword>
<reference key="1">
    <citation type="journal article" date="2001" name="Biol. Reprod.">
        <title>Kinesin light-chain KLC3 expression in testis is restricted to spermatids.</title>
        <authorList>
            <person name="Junco A."/>
            <person name="Bhullar B."/>
            <person name="Tarnasky H.A."/>
            <person name="van der Hoorn F.A."/>
        </authorList>
    </citation>
    <scope>NUCLEOTIDE SEQUENCE [MRNA]</scope>
    <scope>ASSOCIATION WITH MICROTUBULES</scope>
    <scope>INTERACTION WITH KIF5C</scope>
    <scope>TISSUE SPECIFICITY</scope>
    <scope>SUBCELLULAR LOCATION</scope>
    <scope>DOMAIN</scope>
    <source>
        <tissue>Testis</tissue>
    </source>
</reference>
<reference key="2">
    <citation type="journal article" date="2004" name="Genome Res.">
        <title>The status, quality, and expansion of the NIH full-length cDNA project: the Mammalian Gene Collection (MGC).</title>
        <authorList>
            <consortium name="The MGC Project Team"/>
        </authorList>
    </citation>
    <scope>NUCLEOTIDE SEQUENCE [LARGE SCALE MRNA]</scope>
    <source>
        <tissue>Testis</tissue>
    </source>
</reference>
<reference key="3">
    <citation type="journal article" date="2003" name="J. Biol. Chem.">
        <title>Association of kinesin light chain with outer dense fibers in a microtubule-independent fashion.</title>
        <authorList>
            <person name="Bhullar B."/>
            <person name="Zhang Y."/>
            <person name="Junco A."/>
            <person name="Oko R."/>
            <person name="van der Hoorn F.A."/>
        </authorList>
    </citation>
    <scope>INTERACTION WITH ODF1</scope>
    <scope>SUBCELLULAR LOCATION</scope>
    <scope>DOMAIN</scope>
</reference>
<reference key="4">
    <citation type="journal article" date="2004" name="Dev. Biol.">
        <title>Rat kinesin light chain 3 associates with spermatid mitochondria.</title>
        <authorList>
            <person name="Zhang Y."/>
            <person name="Oko R."/>
            <person name="van der Hoorn F.A."/>
        </authorList>
    </citation>
    <scope>SUBCELLULAR LOCATION</scope>
    <scope>DOMAIN</scope>
</reference>